<feature type="chain" id="PRO_1000017140" description="tRNA pseudouridine synthase A">
    <location>
        <begin position="1"/>
        <end position="268"/>
    </location>
</feature>
<feature type="active site" description="Nucleophile" evidence="1">
    <location>
        <position position="52"/>
    </location>
</feature>
<feature type="binding site" evidence="1">
    <location>
        <position position="110"/>
    </location>
    <ligand>
        <name>substrate</name>
    </ligand>
</feature>
<organism>
    <name type="scientific">Prochlorococcus marinus (strain AS9601)</name>
    <dbReference type="NCBI Taxonomy" id="146891"/>
    <lineage>
        <taxon>Bacteria</taxon>
        <taxon>Bacillati</taxon>
        <taxon>Cyanobacteriota</taxon>
        <taxon>Cyanophyceae</taxon>
        <taxon>Synechococcales</taxon>
        <taxon>Prochlorococcaceae</taxon>
        <taxon>Prochlorococcus</taxon>
    </lineage>
</organism>
<proteinExistence type="inferred from homology"/>
<gene>
    <name evidence="1" type="primary">truA</name>
    <name type="ordered locus">A9601_17411</name>
</gene>
<sequence length="268" mass="30685">MKRVALLVQYDGSHYSGWQKQKNANTIQEILDKALLKITNHTVKTFAAGRTDAGVHASGQVIHFDIDCVIPGNSYSDVLNSLLPSTIRILESVEVKDSWHACYSASYRHYRYVINNSKFPNLFINNWSWHRYQKVLDEVLMLNASKKMEGEHDFFAFQKSGSNRQNSITKIKNIDVKRVEDLILVDIKATGFLYGMVRLIVGQLVLVGEKKISPEIFTDRWVNKKKNDVKESAPAKGLCFVNAVYEENVFKKIKNNDFFPIFLIEGFS</sequence>
<evidence type="ECO:0000255" key="1">
    <source>
        <dbReference type="HAMAP-Rule" id="MF_00171"/>
    </source>
</evidence>
<reference key="1">
    <citation type="journal article" date="2007" name="PLoS Genet.">
        <title>Patterns and implications of gene gain and loss in the evolution of Prochlorococcus.</title>
        <authorList>
            <person name="Kettler G.C."/>
            <person name="Martiny A.C."/>
            <person name="Huang K."/>
            <person name="Zucker J."/>
            <person name="Coleman M.L."/>
            <person name="Rodrigue S."/>
            <person name="Chen F."/>
            <person name="Lapidus A."/>
            <person name="Ferriera S."/>
            <person name="Johnson J."/>
            <person name="Steglich C."/>
            <person name="Church G.M."/>
            <person name="Richardson P."/>
            <person name="Chisholm S.W."/>
        </authorList>
    </citation>
    <scope>NUCLEOTIDE SEQUENCE [LARGE SCALE GENOMIC DNA]</scope>
    <source>
        <strain>AS9601</strain>
    </source>
</reference>
<protein>
    <recommendedName>
        <fullName evidence="1">tRNA pseudouridine synthase A</fullName>
        <ecNumber evidence="1">5.4.99.12</ecNumber>
    </recommendedName>
    <alternativeName>
        <fullName evidence="1">tRNA pseudouridine(38-40) synthase</fullName>
    </alternativeName>
    <alternativeName>
        <fullName evidence="1">tRNA pseudouridylate synthase I</fullName>
    </alternativeName>
    <alternativeName>
        <fullName evidence="1">tRNA-uridine isomerase I</fullName>
    </alternativeName>
</protein>
<name>TRUA_PROMS</name>
<accession>A2BTB3</accession>
<keyword id="KW-0413">Isomerase</keyword>
<keyword id="KW-0819">tRNA processing</keyword>
<dbReference type="EC" id="5.4.99.12" evidence="1"/>
<dbReference type="EMBL" id="CP000551">
    <property type="protein sequence ID" value="ABM71024.1"/>
    <property type="molecule type" value="Genomic_DNA"/>
</dbReference>
<dbReference type="RefSeq" id="WP_011819149.1">
    <property type="nucleotide sequence ID" value="NC_008816.1"/>
</dbReference>
<dbReference type="SMR" id="A2BTB3"/>
<dbReference type="STRING" id="146891.A9601_17411"/>
<dbReference type="KEGG" id="pmb:A9601_17411"/>
<dbReference type="eggNOG" id="COG0101">
    <property type="taxonomic scope" value="Bacteria"/>
</dbReference>
<dbReference type="HOGENOM" id="CLU_014673_0_1_3"/>
<dbReference type="OrthoDB" id="9811823at2"/>
<dbReference type="Proteomes" id="UP000002590">
    <property type="component" value="Chromosome"/>
</dbReference>
<dbReference type="GO" id="GO:0003723">
    <property type="term" value="F:RNA binding"/>
    <property type="evidence" value="ECO:0007669"/>
    <property type="project" value="InterPro"/>
</dbReference>
<dbReference type="GO" id="GO:0160147">
    <property type="term" value="F:tRNA pseudouridine(38-40) synthase activity"/>
    <property type="evidence" value="ECO:0007669"/>
    <property type="project" value="UniProtKB-EC"/>
</dbReference>
<dbReference type="GO" id="GO:0031119">
    <property type="term" value="P:tRNA pseudouridine synthesis"/>
    <property type="evidence" value="ECO:0007669"/>
    <property type="project" value="UniProtKB-UniRule"/>
</dbReference>
<dbReference type="CDD" id="cd02570">
    <property type="entry name" value="PseudoU_synth_EcTruA"/>
    <property type="match status" value="1"/>
</dbReference>
<dbReference type="FunFam" id="3.30.70.580:FF:000001">
    <property type="entry name" value="tRNA pseudouridine synthase A"/>
    <property type="match status" value="1"/>
</dbReference>
<dbReference type="Gene3D" id="3.30.70.660">
    <property type="entry name" value="Pseudouridine synthase I, catalytic domain, C-terminal subdomain"/>
    <property type="match status" value="1"/>
</dbReference>
<dbReference type="Gene3D" id="3.30.70.580">
    <property type="entry name" value="Pseudouridine synthase I, catalytic domain, N-terminal subdomain"/>
    <property type="match status" value="1"/>
</dbReference>
<dbReference type="HAMAP" id="MF_00171">
    <property type="entry name" value="TruA"/>
    <property type="match status" value="1"/>
</dbReference>
<dbReference type="InterPro" id="IPR020103">
    <property type="entry name" value="PsdUridine_synth_cat_dom_sf"/>
</dbReference>
<dbReference type="InterPro" id="IPR001406">
    <property type="entry name" value="PsdUridine_synth_TruA"/>
</dbReference>
<dbReference type="InterPro" id="IPR020097">
    <property type="entry name" value="PsdUridine_synth_TruA_a/b_dom"/>
</dbReference>
<dbReference type="InterPro" id="IPR020095">
    <property type="entry name" value="PsdUridine_synth_TruA_C"/>
</dbReference>
<dbReference type="InterPro" id="IPR020094">
    <property type="entry name" value="TruA/RsuA/RluB/E/F_N"/>
</dbReference>
<dbReference type="NCBIfam" id="TIGR00071">
    <property type="entry name" value="hisT_truA"/>
    <property type="match status" value="1"/>
</dbReference>
<dbReference type="PANTHER" id="PTHR11142">
    <property type="entry name" value="PSEUDOURIDYLATE SYNTHASE"/>
    <property type="match status" value="1"/>
</dbReference>
<dbReference type="PANTHER" id="PTHR11142:SF0">
    <property type="entry name" value="TRNA PSEUDOURIDINE SYNTHASE-LIKE 1"/>
    <property type="match status" value="1"/>
</dbReference>
<dbReference type="Pfam" id="PF01416">
    <property type="entry name" value="PseudoU_synth_1"/>
    <property type="match status" value="2"/>
</dbReference>
<dbReference type="PIRSF" id="PIRSF001430">
    <property type="entry name" value="tRNA_psdUrid_synth"/>
    <property type="match status" value="1"/>
</dbReference>
<dbReference type="SUPFAM" id="SSF55120">
    <property type="entry name" value="Pseudouridine synthase"/>
    <property type="match status" value="1"/>
</dbReference>
<comment type="function">
    <text evidence="1">Formation of pseudouridine at positions 38, 39 and 40 in the anticodon stem and loop of transfer RNAs.</text>
</comment>
<comment type="catalytic activity">
    <reaction evidence="1">
        <text>uridine(38/39/40) in tRNA = pseudouridine(38/39/40) in tRNA</text>
        <dbReference type="Rhea" id="RHEA:22376"/>
        <dbReference type="Rhea" id="RHEA-COMP:10085"/>
        <dbReference type="Rhea" id="RHEA-COMP:10087"/>
        <dbReference type="ChEBI" id="CHEBI:65314"/>
        <dbReference type="ChEBI" id="CHEBI:65315"/>
        <dbReference type="EC" id="5.4.99.12"/>
    </reaction>
</comment>
<comment type="subunit">
    <text evidence="1">Homodimer.</text>
</comment>
<comment type="similarity">
    <text evidence="1">Belongs to the tRNA pseudouridine synthase TruA family.</text>
</comment>